<comment type="function">
    <text evidence="1">Catalyzes the oxidation of 3-carboxy-2-hydroxy-4-methylpentanoate (3-isopropylmalate) to 3-carboxy-4-methyl-2-oxopentanoate. The product decarboxylates to 4-methyl-2 oxopentanoate.</text>
</comment>
<comment type="catalytic activity">
    <reaction evidence="1">
        <text>(2R,3S)-3-isopropylmalate + NAD(+) = 4-methyl-2-oxopentanoate + CO2 + NADH</text>
        <dbReference type="Rhea" id="RHEA:32271"/>
        <dbReference type="ChEBI" id="CHEBI:16526"/>
        <dbReference type="ChEBI" id="CHEBI:17865"/>
        <dbReference type="ChEBI" id="CHEBI:35121"/>
        <dbReference type="ChEBI" id="CHEBI:57540"/>
        <dbReference type="ChEBI" id="CHEBI:57945"/>
        <dbReference type="EC" id="1.1.1.85"/>
    </reaction>
</comment>
<comment type="cofactor">
    <cofactor evidence="1">
        <name>Mg(2+)</name>
        <dbReference type="ChEBI" id="CHEBI:18420"/>
    </cofactor>
    <cofactor evidence="1">
        <name>Mn(2+)</name>
        <dbReference type="ChEBI" id="CHEBI:29035"/>
    </cofactor>
    <text evidence="1">Binds 1 Mg(2+) or Mn(2+) ion per subunit.</text>
</comment>
<comment type="pathway">
    <text evidence="1">Amino-acid biosynthesis; L-leucine biosynthesis; L-leucine from 3-methyl-2-oxobutanoate: step 3/4.</text>
</comment>
<comment type="subunit">
    <text evidence="1">Homodimer.</text>
</comment>
<comment type="subcellular location">
    <subcellularLocation>
        <location evidence="1">Cytoplasm</location>
    </subcellularLocation>
</comment>
<comment type="similarity">
    <text evidence="1">Belongs to the isocitrate and isopropylmalate dehydrogenases family. LeuB type 2 subfamily.</text>
</comment>
<gene>
    <name evidence="1" type="primary">leuB</name>
    <name type="ordered locus">MMAR_1716</name>
</gene>
<keyword id="KW-0028">Amino-acid biosynthesis</keyword>
<keyword id="KW-0100">Branched-chain amino acid biosynthesis</keyword>
<keyword id="KW-0963">Cytoplasm</keyword>
<keyword id="KW-0432">Leucine biosynthesis</keyword>
<keyword id="KW-0460">Magnesium</keyword>
<keyword id="KW-0464">Manganese</keyword>
<keyword id="KW-0479">Metal-binding</keyword>
<keyword id="KW-0520">NAD</keyword>
<keyword id="KW-0560">Oxidoreductase</keyword>
<keyword id="KW-1185">Reference proteome</keyword>
<protein>
    <recommendedName>
        <fullName evidence="1">3-isopropylmalate dehydrogenase</fullName>
        <ecNumber evidence="1">1.1.1.85</ecNumber>
    </recommendedName>
    <alternativeName>
        <fullName evidence="1">3-IPM-DH</fullName>
    </alternativeName>
    <alternativeName>
        <fullName evidence="1">Beta-IPM dehydrogenase</fullName>
        <shortName evidence="1">IMDH</shortName>
    </alternativeName>
</protein>
<evidence type="ECO:0000255" key="1">
    <source>
        <dbReference type="HAMAP-Rule" id="MF_01035"/>
    </source>
</evidence>
<sequence length="339" mass="36046">MKLAIVAGDGIGPEVVAQAVKVLDVVQPGVEKTNYDLGARRFHATGEILPDSVIAELREHDAILLGAIGDPSVPSGVLERGLLLRLRFELDHHINLRPGRLYPGVKSPLALEPGNPEIDFVVVREGTEGPYTGNGGAIRVGTANEVATEVSVNTAFGVRRVVRDAFERAMRRRKHLTLVHKNNVLTFAGSLWWRTVQEIGEEYPDVELAYQHVDAATIHMVTDPGRFDVIVTDNLFGDIITDLAAAVCGGIGLAASGNIDATRTNPSMFEPVHGSAPDIAGQGIADPTAAIMSVSLLLAHLGLDDAASRVDRAVEGYLATRGNERLATAAVGERIAAAL</sequence>
<accession>B2HIH1</accession>
<feature type="chain" id="PRO_1000135857" description="3-isopropylmalate dehydrogenase">
    <location>
        <begin position="1"/>
        <end position="339"/>
    </location>
</feature>
<feature type="binding site" evidence="1">
    <location>
        <position position="87"/>
    </location>
    <ligand>
        <name>substrate</name>
    </ligand>
</feature>
<feature type="binding site" evidence="1">
    <location>
        <position position="97"/>
    </location>
    <ligand>
        <name>substrate</name>
    </ligand>
</feature>
<feature type="binding site" evidence="1">
    <location>
        <position position="124"/>
    </location>
    <ligand>
        <name>substrate</name>
    </ligand>
</feature>
<feature type="binding site" evidence="1">
    <location>
        <position position="214"/>
    </location>
    <ligand>
        <name>Mg(2+)</name>
        <dbReference type="ChEBI" id="CHEBI:18420"/>
    </ligand>
</feature>
<feature type="binding site" evidence="1">
    <location>
        <position position="214"/>
    </location>
    <ligand>
        <name>substrate</name>
    </ligand>
</feature>
<feature type="binding site" evidence="1">
    <location>
        <position position="238"/>
    </location>
    <ligand>
        <name>Mg(2+)</name>
        <dbReference type="ChEBI" id="CHEBI:18420"/>
    </ligand>
</feature>
<feature type="binding site" evidence="1">
    <location>
        <position position="242"/>
    </location>
    <ligand>
        <name>Mg(2+)</name>
        <dbReference type="ChEBI" id="CHEBI:18420"/>
    </ligand>
</feature>
<feature type="binding site" evidence="1">
    <location>
        <begin position="274"/>
        <end position="286"/>
    </location>
    <ligand>
        <name>NAD(+)</name>
        <dbReference type="ChEBI" id="CHEBI:57540"/>
    </ligand>
</feature>
<feature type="site" description="Important for catalysis" evidence="1">
    <location>
        <position position="131"/>
    </location>
</feature>
<feature type="site" description="Important for catalysis" evidence="1">
    <location>
        <position position="181"/>
    </location>
</feature>
<dbReference type="EC" id="1.1.1.85" evidence="1"/>
<dbReference type="EMBL" id="CP000854">
    <property type="protein sequence ID" value="ACC40165.1"/>
    <property type="molecule type" value="Genomic_DNA"/>
</dbReference>
<dbReference type="RefSeq" id="WP_012393531.1">
    <property type="nucleotide sequence ID" value="NC_010612.1"/>
</dbReference>
<dbReference type="SMR" id="B2HIH1"/>
<dbReference type="STRING" id="216594.MMAR_1716"/>
<dbReference type="KEGG" id="mmi:MMAR_1716"/>
<dbReference type="eggNOG" id="COG0473">
    <property type="taxonomic scope" value="Bacteria"/>
</dbReference>
<dbReference type="HOGENOM" id="CLU_031953_0_1_11"/>
<dbReference type="OrthoDB" id="5289857at2"/>
<dbReference type="UniPathway" id="UPA00048">
    <property type="reaction ID" value="UER00072"/>
</dbReference>
<dbReference type="Proteomes" id="UP000001190">
    <property type="component" value="Chromosome"/>
</dbReference>
<dbReference type="GO" id="GO:0005737">
    <property type="term" value="C:cytoplasm"/>
    <property type="evidence" value="ECO:0007669"/>
    <property type="project" value="UniProtKB-SubCell"/>
</dbReference>
<dbReference type="GO" id="GO:0003862">
    <property type="term" value="F:3-isopropylmalate dehydrogenase activity"/>
    <property type="evidence" value="ECO:0007669"/>
    <property type="project" value="UniProtKB-UniRule"/>
</dbReference>
<dbReference type="GO" id="GO:0000287">
    <property type="term" value="F:magnesium ion binding"/>
    <property type="evidence" value="ECO:0007669"/>
    <property type="project" value="InterPro"/>
</dbReference>
<dbReference type="GO" id="GO:0051287">
    <property type="term" value="F:NAD binding"/>
    <property type="evidence" value="ECO:0007669"/>
    <property type="project" value="InterPro"/>
</dbReference>
<dbReference type="GO" id="GO:0009098">
    <property type="term" value="P:L-leucine biosynthetic process"/>
    <property type="evidence" value="ECO:0007669"/>
    <property type="project" value="UniProtKB-UniRule"/>
</dbReference>
<dbReference type="Gene3D" id="3.40.718.10">
    <property type="entry name" value="Isopropylmalate Dehydrogenase"/>
    <property type="match status" value="1"/>
</dbReference>
<dbReference type="HAMAP" id="MF_01035">
    <property type="entry name" value="LeuB_type2"/>
    <property type="match status" value="1"/>
</dbReference>
<dbReference type="InterPro" id="IPR050501">
    <property type="entry name" value="ICDH/IPMDH"/>
</dbReference>
<dbReference type="InterPro" id="IPR019818">
    <property type="entry name" value="IsoCit/isopropylmalate_DH_CS"/>
</dbReference>
<dbReference type="InterPro" id="IPR024084">
    <property type="entry name" value="IsoPropMal-DH-like_dom"/>
</dbReference>
<dbReference type="InterPro" id="IPR023698">
    <property type="entry name" value="LeuB_actb"/>
</dbReference>
<dbReference type="NCBIfam" id="NF002898">
    <property type="entry name" value="PRK03437.1"/>
    <property type="match status" value="1"/>
</dbReference>
<dbReference type="PANTHER" id="PTHR43275">
    <property type="entry name" value="D-MALATE DEHYDROGENASE [DECARBOXYLATING]"/>
    <property type="match status" value="1"/>
</dbReference>
<dbReference type="PANTHER" id="PTHR43275:SF1">
    <property type="entry name" value="D-MALATE DEHYDROGENASE [DECARBOXYLATING]"/>
    <property type="match status" value="1"/>
</dbReference>
<dbReference type="Pfam" id="PF00180">
    <property type="entry name" value="Iso_dh"/>
    <property type="match status" value="1"/>
</dbReference>
<dbReference type="SMART" id="SM01329">
    <property type="entry name" value="Iso_dh"/>
    <property type="match status" value="1"/>
</dbReference>
<dbReference type="SUPFAM" id="SSF53659">
    <property type="entry name" value="Isocitrate/Isopropylmalate dehydrogenase-like"/>
    <property type="match status" value="1"/>
</dbReference>
<dbReference type="PROSITE" id="PS00470">
    <property type="entry name" value="IDH_IMDH"/>
    <property type="match status" value="1"/>
</dbReference>
<organism>
    <name type="scientific">Mycobacterium marinum (strain ATCC BAA-535 / M)</name>
    <dbReference type="NCBI Taxonomy" id="216594"/>
    <lineage>
        <taxon>Bacteria</taxon>
        <taxon>Bacillati</taxon>
        <taxon>Actinomycetota</taxon>
        <taxon>Actinomycetes</taxon>
        <taxon>Mycobacteriales</taxon>
        <taxon>Mycobacteriaceae</taxon>
        <taxon>Mycobacterium</taxon>
        <taxon>Mycobacterium ulcerans group</taxon>
    </lineage>
</organism>
<reference key="1">
    <citation type="journal article" date="2008" name="Genome Res.">
        <title>Insights from the complete genome sequence of Mycobacterium marinum on the evolution of Mycobacterium tuberculosis.</title>
        <authorList>
            <person name="Stinear T.P."/>
            <person name="Seemann T."/>
            <person name="Harrison P.F."/>
            <person name="Jenkin G.A."/>
            <person name="Davies J.K."/>
            <person name="Johnson P.D."/>
            <person name="Abdellah Z."/>
            <person name="Arrowsmith C."/>
            <person name="Chillingworth T."/>
            <person name="Churcher C."/>
            <person name="Clarke K."/>
            <person name="Cronin A."/>
            <person name="Davis P."/>
            <person name="Goodhead I."/>
            <person name="Holroyd N."/>
            <person name="Jagels K."/>
            <person name="Lord A."/>
            <person name="Moule S."/>
            <person name="Mungall K."/>
            <person name="Norbertczak H."/>
            <person name="Quail M.A."/>
            <person name="Rabbinowitsch E."/>
            <person name="Walker D."/>
            <person name="White B."/>
            <person name="Whitehead S."/>
            <person name="Small P.L."/>
            <person name="Brosch R."/>
            <person name="Ramakrishnan L."/>
            <person name="Fischbach M.A."/>
            <person name="Parkhill J."/>
            <person name="Cole S.T."/>
        </authorList>
    </citation>
    <scope>NUCLEOTIDE SEQUENCE [LARGE SCALE GENOMIC DNA]</scope>
    <source>
        <strain>ATCC BAA-535 / M</strain>
    </source>
</reference>
<name>LEU3_MYCMM</name>
<proteinExistence type="inferred from homology"/>